<accession>C5BAC7</accession>
<reference key="1">
    <citation type="submission" date="2009-03" db="EMBL/GenBank/DDBJ databases">
        <title>Complete genome sequence of Edwardsiella ictaluri 93-146.</title>
        <authorList>
            <person name="Williams M.L."/>
            <person name="Gillaspy A.F."/>
            <person name="Dyer D.W."/>
            <person name="Thune R.L."/>
            <person name="Waldbieser G.C."/>
            <person name="Schuster S.C."/>
            <person name="Gipson J."/>
            <person name="Zaitshik J."/>
            <person name="Landry C."/>
            <person name="Lawrence M.L."/>
        </authorList>
    </citation>
    <scope>NUCLEOTIDE SEQUENCE [LARGE SCALE GENOMIC DNA]</scope>
    <source>
        <strain>93-146</strain>
    </source>
</reference>
<protein>
    <recommendedName>
        <fullName evidence="1">Chromosome partition protein MukB</fullName>
    </recommendedName>
    <alternativeName>
        <fullName evidence="1">Structural maintenance of chromosome-related protein</fullName>
    </alternativeName>
</protein>
<keyword id="KW-0067">ATP-binding</keyword>
<keyword id="KW-0131">Cell cycle</keyword>
<keyword id="KW-0132">Cell division</keyword>
<keyword id="KW-0159">Chromosome partition</keyword>
<keyword id="KW-0175">Coiled coil</keyword>
<keyword id="KW-0963">Cytoplasm</keyword>
<keyword id="KW-0226">DNA condensation</keyword>
<keyword id="KW-0238">DNA-binding</keyword>
<keyword id="KW-0547">Nucleotide-binding</keyword>
<name>MUKB_EDWI9</name>
<sequence>MIERGKFRSLTLVNWNGFFARTFDLDELVTTLSGGNGAGKSTTMAAFVTALIPDLTLLHFRNTTEAGATSGSRDKGLHGKLRPGVCYAALDVVNSRHQRVLVGVRLQQVAGRDRKVDIKPFAIQGLPTAYQPTQLLTETVDGRQARVLALPELKERVEAIDGVQFKQFNSITDYHALMFDLGVVPRRLRSAADRSKFYRLIEASLYGGISSAITRSLRDYLLPENGGVRKAFQDMEAALRENRMTLEAIRVTQSDRDLFKHLISEATAYVSADYMRHANERRSHLDQALQLRRELLGGRRQLLSEQYRHVEMARELEEQNGAEADLETDYQAASDHLNLVQTALRQREKIERYQGDLEELSYRLDEQSEVAAEAQEQYESCQERSEAAEAEVDELKSQLADYQQALDVQQTRAIQYQQALQALARAQTLCTLPALSADDVESWLEDFRAREEEATELLLQLEQKLSVANAAHSQFEEAYRLVARVVGEVSRSDAWQAGRALLREWPALQHQAQRVAPIGARLAELEQRLNAQQDAERLLQECVKRSGRDCDAQQLDALQAELEAQIDTLTQQAADAGERSMALRQELEQIAGRVGTLSARAPAWIAAQEALNALESQCGETLEESRAVTDQMQQLLEREREYTVERDEIAARKGALEREIERLSQPGGAEDARLIALAERFGGVLLSEIYDDVTLDDAPYFSALYGPSRHAIVVPDLAAVRAQLAGLEECPEDLYLIEGDPQSFDDSVFAVEELEKAVVVKIADRQWRYSRFPSLPLFGRAARESRLETLYTEREALAERYATLSFDVQKIQRLHHAFSRFIGSHLAVVFDNDPEQELRQLQQRRGEIEREFTGQDAQTQQQRQQLQQARELAGLLNRLVPQVGLLADETLPDRVDELREELEQARDAARYLQQHGATLAALEPVIGVLQSDPQQHEQLQQDYQQALQRQRLTKQQAFALTEVAQRRAHFSYSDAVGMLGENADLNERLRQRLEHAEADRSRSREQLRQHQAQLAQYNQVLASLKSAFDAKRDMLQELQQEMQDIGVVADASAEARARTRRDELHAALSENRSRRNQLEKQITICEAEMESLIKRLRKAERDYHLMRTQVTQAKAGWCAVMRLVRDNGVERRLHRRELAYMDADELRSMSDKALGALRLAVADNEHLRDVLRLSEDPKRPERKVQFYVAVYQHLRERIRQDIIRSDDPIDAIEQMEIELARLTEELTAREQKLAISARSVANIIRKTIQREQNRIRMLNQGLQSVAFGQVNSVRLNVNVRDSHAMLLNVLSEQQEQHQDLFNSNRLTFSEALAKLYQRLNPQIDMGQRTPQTIGEELLDYRSYLEMEVEVNRGSDGWLRAESGALSTGEAIGTGMSILVMVVQSWEEESRRLRGKDISPCRLLFLDEAARLDAKSIATLFELCERLEMQLIIAAPENISPEKGTTYKLVRKVFNHIEHVHVVGLRGFSAAAEEEHMAQPLEDTPA</sequence>
<feature type="chain" id="PRO_1000215936" description="Chromosome partition protein MukB">
    <location>
        <begin position="1"/>
        <end position="1485"/>
    </location>
</feature>
<feature type="region of interest" description="Flexible hinge" evidence="1">
    <location>
        <begin position="666"/>
        <end position="783"/>
    </location>
</feature>
<feature type="coiled-coil region" evidence="1">
    <location>
        <begin position="311"/>
        <end position="480"/>
    </location>
</feature>
<feature type="coiled-coil region" evidence="1">
    <location>
        <begin position="519"/>
        <end position="665"/>
    </location>
</feature>
<feature type="coiled-coil region" evidence="1">
    <location>
        <begin position="832"/>
        <end position="1115"/>
    </location>
</feature>
<feature type="coiled-coil region" evidence="1">
    <location>
        <begin position="1209"/>
        <end position="1265"/>
    </location>
</feature>
<feature type="binding site" evidence="1">
    <location>
        <begin position="34"/>
        <end position="41"/>
    </location>
    <ligand>
        <name>ATP</name>
        <dbReference type="ChEBI" id="CHEBI:30616"/>
    </ligand>
</feature>
<comment type="function">
    <text evidence="1">Plays a central role in chromosome condensation, segregation and cell cycle progression. Functions as a homodimer, which is essential for chromosome partition. Involved in negative DNA supercoiling in vivo, and by this means organize and compact chromosomes. May achieve or facilitate chromosome segregation by condensation DNA from both sides of a centrally located replisome during cell division.</text>
</comment>
<comment type="subunit">
    <text evidence="1">Homodimerization via its hinge domain. Binds to DNA via its C-terminal region. Interacts, and probably forms a ternary complex, with MukE and MukF via its C-terminal region. The complex formation is stimulated by calcium or magnesium. Interacts with tubulin-related protein FtsZ.</text>
</comment>
<comment type="subcellular location">
    <subcellularLocation>
        <location evidence="1">Cytoplasm</location>
        <location evidence="1">Nucleoid</location>
    </subcellularLocation>
    <text evidence="1">Restricted to the nucleoid region.</text>
</comment>
<comment type="domain">
    <text evidence="1">The hinge domain, which separates the large intramolecular coiled coil regions, allows the homodimerization, forming a V-shaped homodimer.</text>
</comment>
<comment type="similarity">
    <text evidence="1">Belongs to the SMC family. MukB subfamily.</text>
</comment>
<evidence type="ECO:0000255" key="1">
    <source>
        <dbReference type="HAMAP-Rule" id="MF_01800"/>
    </source>
</evidence>
<organism>
    <name type="scientific">Edwardsiella ictaluri (strain 93-146)</name>
    <dbReference type="NCBI Taxonomy" id="634503"/>
    <lineage>
        <taxon>Bacteria</taxon>
        <taxon>Pseudomonadati</taxon>
        <taxon>Pseudomonadota</taxon>
        <taxon>Gammaproteobacteria</taxon>
        <taxon>Enterobacterales</taxon>
        <taxon>Hafniaceae</taxon>
        <taxon>Edwardsiella</taxon>
    </lineage>
</organism>
<dbReference type="EMBL" id="CP001600">
    <property type="protein sequence ID" value="ACR69607.1"/>
    <property type="molecule type" value="Genomic_DNA"/>
</dbReference>
<dbReference type="RefSeq" id="WP_015871723.1">
    <property type="nucleotide sequence ID" value="NZ_CP169062.1"/>
</dbReference>
<dbReference type="SMR" id="C5BAC7"/>
<dbReference type="STRING" id="67780.B6E78_04330"/>
<dbReference type="GeneID" id="69539356"/>
<dbReference type="KEGG" id="eic:NT01EI_2437"/>
<dbReference type="PATRIC" id="fig|634503.3.peg.2160"/>
<dbReference type="HOGENOM" id="CLU_004430_0_0_6"/>
<dbReference type="OrthoDB" id="6722439at2"/>
<dbReference type="Proteomes" id="UP000001485">
    <property type="component" value="Chromosome"/>
</dbReference>
<dbReference type="GO" id="GO:0005737">
    <property type="term" value="C:cytoplasm"/>
    <property type="evidence" value="ECO:0007669"/>
    <property type="project" value="UniProtKB-UniRule"/>
</dbReference>
<dbReference type="GO" id="GO:0009295">
    <property type="term" value="C:nucleoid"/>
    <property type="evidence" value="ECO:0007669"/>
    <property type="project" value="UniProtKB-SubCell"/>
</dbReference>
<dbReference type="GO" id="GO:0005524">
    <property type="term" value="F:ATP binding"/>
    <property type="evidence" value="ECO:0007669"/>
    <property type="project" value="UniProtKB-UniRule"/>
</dbReference>
<dbReference type="GO" id="GO:0003677">
    <property type="term" value="F:DNA binding"/>
    <property type="evidence" value="ECO:0007669"/>
    <property type="project" value="UniProtKB-UniRule"/>
</dbReference>
<dbReference type="GO" id="GO:0051301">
    <property type="term" value="P:cell division"/>
    <property type="evidence" value="ECO:0007669"/>
    <property type="project" value="UniProtKB-KW"/>
</dbReference>
<dbReference type="GO" id="GO:0030261">
    <property type="term" value="P:chromosome condensation"/>
    <property type="evidence" value="ECO:0007669"/>
    <property type="project" value="UniProtKB-KW"/>
</dbReference>
<dbReference type="GO" id="GO:0007059">
    <property type="term" value="P:chromosome segregation"/>
    <property type="evidence" value="ECO:0007669"/>
    <property type="project" value="UniProtKB-UniRule"/>
</dbReference>
<dbReference type="GO" id="GO:0006260">
    <property type="term" value="P:DNA replication"/>
    <property type="evidence" value="ECO:0007669"/>
    <property type="project" value="UniProtKB-UniRule"/>
</dbReference>
<dbReference type="FunFam" id="3.30.70.3500:FF:000001">
    <property type="entry name" value="Chromosome partition protein MukB"/>
    <property type="match status" value="1"/>
</dbReference>
<dbReference type="FunFam" id="3.40.1140.10:FF:000002">
    <property type="entry name" value="Chromosome partition protein MukB"/>
    <property type="match status" value="1"/>
</dbReference>
<dbReference type="Gene3D" id="1.20.58.850">
    <property type="match status" value="1"/>
</dbReference>
<dbReference type="Gene3D" id="3.40.1140.10">
    <property type="match status" value="2"/>
</dbReference>
<dbReference type="Gene3D" id="1.20.5.420">
    <property type="entry name" value="Immunoglobulin FC, subunit C"/>
    <property type="match status" value="1"/>
</dbReference>
<dbReference type="Gene3D" id="3.30.70.3500">
    <property type="entry name" value="MukB, hinge domain"/>
    <property type="match status" value="1"/>
</dbReference>
<dbReference type="HAMAP" id="MF_01800">
    <property type="entry name" value="MukB"/>
    <property type="match status" value="1"/>
</dbReference>
<dbReference type="InterPro" id="IPR012090">
    <property type="entry name" value="MukB"/>
</dbReference>
<dbReference type="InterPro" id="IPR050308">
    <property type="entry name" value="MukB/SMC"/>
</dbReference>
<dbReference type="InterPro" id="IPR032520">
    <property type="entry name" value="MukB_hinge"/>
</dbReference>
<dbReference type="InterPro" id="IPR042501">
    <property type="entry name" value="MukB_hinge_sf"/>
</dbReference>
<dbReference type="InterPro" id="IPR007406">
    <property type="entry name" value="MukB_N_dom"/>
</dbReference>
<dbReference type="InterPro" id="IPR027417">
    <property type="entry name" value="P-loop_NTPase"/>
</dbReference>
<dbReference type="NCBIfam" id="NF003422">
    <property type="entry name" value="PRK04863.1"/>
    <property type="match status" value="1"/>
</dbReference>
<dbReference type="PANTHER" id="PTHR42963">
    <property type="entry name" value="CHROMOSOME PARTITION PROTEIN MUKB"/>
    <property type="match status" value="1"/>
</dbReference>
<dbReference type="PANTHER" id="PTHR42963:SF1">
    <property type="entry name" value="DUF4476 DOMAIN-CONTAINING PROTEIN"/>
    <property type="match status" value="1"/>
</dbReference>
<dbReference type="Pfam" id="PF04310">
    <property type="entry name" value="MukB"/>
    <property type="match status" value="1"/>
</dbReference>
<dbReference type="Pfam" id="PF16330">
    <property type="entry name" value="MukB_hinge"/>
    <property type="match status" value="1"/>
</dbReference>
<dbReference type="Pfam" id="PF13558">
    <property type="entry name" value="SbcC_Walker_B"/>
    <property type="match status" value="1"/>
</dbReference>
<dbReference type="PIRSF" id="PIRSF005246">
    <property type="entry name" value="MukB"/>
    <property type="match status" value="1"/>
</dbReference>
<dbReference type="SUPFAM" id="SSF52540">
    <property type="entry name" value="P-loop containing nucleoside triphosphate hydrolases"/>
    <property type="match status" value="2"/>
</dbReference>
<gene>
    <name evidence="1" type="primary">mukB</name>
    <name type="ordered locus">NT01EI_2437</name>
</gene>
<proteinExistence type="inferred from homology"/>